<sequence>MLDLGWSEILVIAVVLIVVVGPKDLPRVLRSFGRTTAKMRAMAGDFRRQFDEALREAELDDMKGLVDDVRKLDPRSEIRKHLSPLEEAGKEIRSGLSEAAKAKPAASSLPAADSKPAEPLKNGATSLGPEAPPPVTGETAAPKVSEKAEVGAVAASPGTSAKQAAPKAKAAAAAKAPTKNTASAPAKKPSPRRKKTAGTAP</sequence>
<evidence type="ECO:0000255" key="1">
    <source>
        <dbReference type="HAMAP-Rule" id="MF_00237"/>
    </source>
</evidence>
<evidence type="ECO:0000256" key="2">
    <source>
        <dbReference type="SAM" id="MobiDB-lite"/>
    </source>
</evidence>
<gene>
    <name evidence="1" type="primary">tatB</name>
    <name type="ordered locus">Meso_1805</name>
</gene>
<protein>
    <recommendedName>
        <fullName evidence="1">Sec-independent protein translocase protein TatB</fullName>
    </recommendedName>
</protein>
<keyword id="KW-0997">Cell inner membrane</keyword>
<keyword id="KW-1003">Cell membrane</keyword>
<keyword id="KW-0472">Membrane</keyword>
<keyword id="KW-0653">Protein transport</keyword>
<keyword id="KW-0811">Translocation</keyword>
<keyword id="KW-0812">Transmembrane</keyword>
<keyword id="KW-1133">Transmembrane helix</keyword>
<keyword id="KW-0813">Transport</keyword>
<organism>
    <name type="scientific">Chelativorans sp. (strain BNC1)</name>
    <dbReference type="NCBI Taxonomy" id="266779"/>
    <lineage>
        <taxon>Bacteria</taxon>
        <taxon>Pseudomonadati</taxon>
        <taxon>Pseudomonadota</taxon>
        <taxon>Alphaproteobacteria</taxon>
        <taxon>Hyphomicrobiales</taxon>
        <taxon>Phyllobacteriaceae</taxon>
        <taxon>Chelativorans</taxon>
    </lineage>
</organism>
<comment type="function">
    <text evidence="1">Part of the twin-arginine translocation (Tat) system that transports large folded proteins containing a characteristic twin-arginine motif in their signal peptide across membranes. Together with TatC, TatB is part of a receptor directly interacting with Tat signal peptides. TatB may form an oligomeric binding site that transiently accommodates folded Tat precursor proteins before their translocation.</text>
</comment>
<comment type="subunit">
    <text evidence="1">The Tat system comprises two distinct complexes: a TatABC complex, containing multiple copies of TatA, TatB and TatC subunits, and a separate TatA complex, containing only TatA subunits. Substrates initially bind to the TatABC complex, which probably triggers association of the separate TatA complex to form the active translocon.</text>
</comment>
<comment type="subcellular location">
    <subcellularLocation>
        <location evidence="1">Cell inner membrane</location>
        <topology evidence="1">Single-pass membrane protein</topology>
    </subcellularLocation>
</comment>
<comment type="similarity">
    <text evidence="1">Belongs to the TatB family.</text>
</comment>
<name>TATB_CHESB</name>
<proteinExistence type="inferred from homology"/>
<feature type="chain" id="PRO_0000301183" description="Sec-independent protein translocase protein TatB">
    <location>
        <begin position="1"/>
        <end position="201"/>
    </location>
</feature>
<feature type="transmembrane region" description="Helical" evidence="1">
    <location>
        <begin position="1"/>
        <end position="21"/>
    </location>
</feature>
<feature type="region of interest" description="Disordered" evidence="2">
    <location>
        <begin position="96"/>
        <end position="201"/>
    </location>
</feature>
<feature type="compositionally biased region" description="Low complexity" evidence="2">
    <location>
        <begin position="102"/>
        <end position="114"/>
    </location>
</feature>
<feature type="compositionally biased region" description="Low complexity" evidence="2">
    <location>
        <begin position="159"/>
        <end position="187"/>
    </location>
</feature>
<feature type="compositionally biased region" description="Basic residues" evidence="2">
    <location>
        <begin position="189"/>
        <end position="201"/>
    </location>
</feature>
<dbReference type="EMBL" id="CP000390">
    <property type="protein sequence ID" value="ABG63199.1"/>
    <property type="molecule type" value="Genomic_DNA"/>
</dbReference>
<dbReference type="SMR" id="Q11HC6"/>
<dbReference type="STRING" id="266779.Meso_1805"/>
<dbReference type="KEGG" id="mes:Meso_1805"/>
<dbReference type="eggNOG" id="COG1826">
    <property type="taxonomic scope" value="Bacteria"/>
</dbReference>
<dbReference type="HOGENOM" id="CLU_086034_1_3_5"/>
<dbReference type="OrthoDB" id="7206969at2"/>
<dbReference type="GO" id="GO:0033281">
    <property type="term" value="C:TAT protein transport complex"/>
    <property type="evidence" value="ECO:0007669"/>
    <property type="project" value="UniProtKB-UniRule"/>
</dbReference>
<dbReference type="GO" id="GO:0008320">
    <property type="term" value="F:protein transmembrane transporter activity"/>
    <property type="evidence" value="ECO:0007669"/>
    <property type="project" value="UniProtKB-UniRule"/>
</dbReference>
<dbReference type="GO" id="GO:0043953">
    <property type="term" value="P:protein transport by the Tat complex"/>
    <property type="evidence" value="ECO:0007669"/>
    <property type="project" value="UniProtKB-UniRule"/>
</dbReference>
<dbReference type="Gene3D" id="1.20.5.3310">
    <property type="match status" value="1"/>
</dbReference>
<dbReference type="HAMAP" id="MF_00237">
    <property type="entry name" value="TatB"/>
    <property type="match status" value="1"/>
</dbReference>
<dbReference type="InterPro" id="IPR003369">
    <property type="entry name" value="TatA/B/E"/>
</dbReference>
<dbReference type="InterPro" id="IPR018448">
    <property type="entry name" value="TatB"/>
</dbReference>
<dbReference type="NCBIfam" id="TIGR01410">
    <property type="entry name" value="tatB"/>
    <property type="match status" value="1"/>
</dbReference>
<dbReference type="PANTHER" id="PTHR33162">
    <property type="entry name" value="SEC-INDEPENDENT PROTEIN TRANSLOCASE PROTEIN TATA, CHLOROPLASTIC"/>
    <property type="match status" value="1"/>
</dbReference>
<dbReference type="PANTHER" id="PTHR33162:SF1">
    <property type="entry name" value="SEC-INDEPENDENT PROTEIN TRANSLOCASE PROTEIN TATA, CHLOROPLASTIC"/>
    <property type="match status" value="1"/>
</dbReference>
<dbReference type="Pfam" id="PF02416">
    <property type="entry name" value="TatA_B_E"/>
    <property type="match status" value="1"/>
</dbReference>
<dbReference type="PRINTS" id="PR01506">
    <property type="entry name" value="TATBPROTEIN"/>
</dbReference>
<accession>Q11HC6</accession>
<reference key="1">
    <citation type="submission" date="2006-06" db="EMBL/GenBank/DDBJ databases">
        <title>Complete sequence of chromosome of Mesorhizobium sp. BNC1.</title>
        <authorList>
            <consortium name="US DOE Joint Genome Institute"/>
            <person name="Copeland A."/>
            <person name="Lucas S."/>
            <person name="Lapidus A."/>
            <person name="Barry K."/>
            <person name="Detter J.C."/>
            <person name="Glavina del Rio T."/>
            <person name="Hammon N."/>
            <person name="Israni S."/>
            <person name="Dalin E."/>
            <person name="Tice H."/>
            <person name="Pitluck S."/>
            <person name="Chertkov O."/>
            <person name="Brettin T."/>
            <person name="Bruce D."/>
            <person name="Han C."/>
            <person name="Tapia R."/>
            <person name="Gilna P."/>
            <person name="Schmutz J."/>
            <person name="Larimer F."/>
            <person name="Land M."/>
            <person name="Hauser L."/>
            <person name="Kyrpides N."/>
            <person name="Mikhailova N."/>
            <person name="Richardson P."/>
        </authorList>
    </citation>
    <scope>NUCLEOTIDE SEQUENCE [LARGE SCALE GENOMIC DNA]</scope>
    <source>
        <strain>BNC1</strain>
    </source>
</reference>